<keyword id="KW-0067">ATP-binding</keyword>
<keyword id="KW-0963">Cytoplasm</keyword>
<keyword id="KW-0227">DNA damage</keyword>
<keyword id="KW-0233">DNA recombination</keyword>
<keyword id="KW-0234">DNA repair</keyword>
<keyword id="KW-0238">DNA-binding</keyword>
<keyword id="KW-0547">Nucleotide-binding</keyword>
<keyword id="KW-0742">SOS response</keyword>
<accession>P42441</accession>
<accession>A6LSR8</accession>
<organism>
    <name type="scientific">Clostridium beijerinckii (strain ATCC 51743 / NCIMB 8052)</name>
    <name type="common">Clostridium acetobutylicum</name>
    <dbReference type="NCBI Taxonomy" id="290402"/>
    <lineage>
        <taxon>Bacteria</taxon>
        <taxon>Bacillati</taxon>
        <taxon>Bacillota</taxon>
        <taxon>Clostridia</taxon>
        <taxon>Eubacteriales</taxon>
        <taxon>Clostridiaceae</taxon>
        <taxon>Clostridium</taxon>
    </lineage>
</organism>
<name>RECA_CLOB8</name>
<proteinExistence type="inferred from homology"/>
<sequence>MGIINAEKLKAIESAMSHIEKQFGKGSVMKLGDHNISNMDAISTGCLDLDIALGIGGVPKGRIIEIYGPESSGKTTIALHIAAESQKKGGAVGYIDAEHALDPSYAQKLGVDVDSLIISQPDTGEQGLEIAEALVRSGAIDVLVVDSVAALVPKAEIEGEMGDSHIGLQARLMSQALRKLAGTINKTNCVAIFINQLREKVGVMFGSPETTTGGRALKFYASVRLDIRRIDSIKQGDSIIGNRTRIKVMKNKVAPPFKQAEFDIMYNEGISRCGNIVDVGVKEEIVQKSGAWFSYGDIRLGQGRENAKLYLKENPEVALDIENQIREKYNLPPAELFKAAAPEGAKENISAKDDVAVDTKE</sequence>
<evidence type="ECO:0000255" key="1">
    <source>
        <dbReference type="HAMAP-Rule" id="MF_00268"/>
    </source>
</evidence>
<evidence type="ECO:0000256" key="2">
    <source>
        <dbReference type="SAM" id="MobiDB-lite"/>
    </source>
</evidence>
<evidence type="ECO:0000305" key="3"/>
<dbReference type="EMBL" id="CP000721">
    <property type="protein sequence ID" value="ABR33398.1"/>
    <property type="molecule type" value="Genomic_DNA"/>
</dbReference>
<dbReference type="EMBL" id="M94057">
    <property type="protein sequence ID" value="AAA23273.1"/>
    <property type="molecule type" value="Genomic_DNA"/>
</dbReference>
<dbReference type="RefSeq" id="WP_011968553.1">
    <property type="nucleotide sequence ID" value="NC_009617.1"/>
</dbReference>
<dbReference type="SMR" id="P42441"/>
<dbReference type="KEGG" id="cbe:Cbei_1216"/>
<dbReference type="eggNOG" id="COG0468">
    <property type="taxonomic scope" value="Bacteria"/>
</dbReference>
<dbReference type="HOGENOM" id="CLU_040469_3_2_9"/>
<dbReference type="Proteomes" id="UP000000565">
    <property type="component" value="Chromosome"/>
</dbReference>
<dbReference type="GO" id="GO:0005829">
    <property type="term" value="C:cytosol"/>
    <property type="evidence" value="ECO:0007669"/>
    <property type="project" value="TreeGrafter"/>
</dbReference>
<dbReference type="GO" id="GO:0005524">
    <property type="term" value="F:ATP binding"/>
    <property type="evidence" value="ECO:0007669"/>
    <property type="project" value="UniProtKB-UniRule"/>
</dbReference>
<dbReference type="GO" id="GO:0016887">
    <property type="term" value="F:ATP hydrolysis activity"/>
    <property type="evidence" value="ECO:0007669"/>
    <property type="project" value="InterPro"/>
</dbReference>
<dbReference type="GO" id="GO:0140664">
    <property type="term" value="F:ATP-dependent DNA damage sensor activity"/>
    <property type="evidence" value="ECO:0007669"/>
    <property type="project" value="InterPro"/>
</dbReference>
<dbReference type="GO" id="GO:0003684">
    <property type="term" value="F:damaged DNA binding"/>
    <property type="evidence" value="ECO:0007669"/>
    <property type="project" value="UniProtKB-UniRule"/>
</dbReference>
<dbReference type="GO" id="GO:0003697">
    <property type="term" value="F:single-stranded DNA binding"/>
    <property type="evidence" value="ECO:0007669"/>
    <property type="project" value="UniProtKB-UniRule"/>
</dbReference>
<dbReference type="GO" id="GO:0006310">
    <property type="term" value="P:DNA recombination"/>
    <property type="evidence" value="ECO:0007669"/>
    <property type="project" value="UniProtKB-UniRule"/>
</dbReference>
<dbReference type="GO" id="GO:0006281">
    <property type="term" value="P:DNA repair"/>
    <property type="evidence" value="ECO:0007669"/>
    <property type="project" value="UniProtKB-UniRule"/>
</dbReference>
<dbReference type="GO" id="GO:0009432">
    <property type="term" value="P:SOS response"/>
    <property type="evidence" value="ECO:0007669"/>
    <property type="project" value="UniProtKB-UniRule"/>
</dbReference>
<dbReference type="CDD" id="cd00983">
    <property type="entry name" value="RecA"/>
    <property type="match status" value="1"/>
</dbReference>
<dbReference type="FunFam" id="3.40.50.300:FF:000087">
    <property type="entry name" value="Recombinase RecA"/>
    <property type="match status" value="1"/>
</dbReference>
<dbReference type="Gene3D" id="3.40.50.300">
    <property type="entry name" value="P-loop containing nucleotide triphosphate hydrolases"/>
    <property type="match status" value="1"/>
</dbReference>
<dbReference type="HAMAP" id="MF_00268">
    <property type="entry name" value="RecA"/>
    <property type="match status" value="1"/>
</dbReference>
<dbReference type="InterPro" id="IPR003593">
    <property type="entry name" value="AAA+_ATPase"/>
</dbReference>
<dbReference type="InterPro" id="IPR013765">
    <property type="entry name" value="DNA_recomb/repair_RecA"/>
</dbReference>
<dbReference type="InterPro" id="IPR020584">
    <property type="entry name" value="DNA_recomb/repair_RecA_CS"/>
</dbReference>
<dbReference type="InterPro" id="IPR027417">
    <property type="entry name" value="P-loop_NTPase"/>
</dbReference>
<dbReference type="InterPro" id="IPR049261">
    <property type="entry name" value="RecA-like_C"/>
</dbReference>
<dbReference type="InterPro" id="IPR049428">
    <property type="entry name" value="RecA-like_N"/>
</dbReference>
<dbReference type="InterPro" id="IPR020588">
    <property type="entry name" value="RecA_ATP-bd"/>
</dbReference>
<dbReference type="InterPro" id="IPR023400">
    <property type="entry name" value="RecA_C_sf"/>
</dbReference>
<dbReference type="InterPro" id="IPR020587">
    <property type="entry name" value="RecA_monomer-monomer_interface"/>
</dbReference>
<dbReference type="NCBIfam" id="TIGR02012">
    <property type="entry name" value="tigrfam_recA"/>
    <property type="match status" value="1"/>
</dbReference>
<dbReference type="PANTHER" id="PTHR45900:SF1">
    <property type="entry name" value="MITOCHONDRIAL DNA REPAIR PROTEIN RECA HOMOLOG-RELATED"/>
    <property type="match status" value="1"/>
</dbReference>
<dbReference type="PANTHER" id="PTHR45900">
    <property type="entry name" value="RECA"/>
    <property type="match status" value="1"/>
</dbReference>
<dbReference type="Pfam" id="PF00154">
    <property type="entry name" value="RecA"/>
    <property type="match status" value="1"/>
</dbReference>
<dbReference type="Pfam" id="PF21096">
    <property type="entry name" value="RecA_C"/>
    <property type="match status" value="1"/>
</dbReference>
<dbReference type="PRINTS" id="PR00142">
    <property type="entry name" value="RECA"/>
</dbReference>
<dbReference type="SMART" id="SM00382">
    <property type="entry name" value="AAA"/>
    <property type="match status" value="1"/>
</dbReference>
<dbReference type="SUPFAM" id="SSF52540">
    <property type="entry name" value="P-loop containing nucleoside triphosphate hydrolases"/>
    <property type="match status" value="1"/>
</dbReference>
<dbReference type="SUPFAM" id="SSF54752">
    <property type="entry name" value="RecA protein, C-terminal domain"/>
    <property type="match status" value="1"/>
</dbReference>
<dbReference type="PROSITE" id="PS00321">
    <property type="entry name" value="RECA_1"/>
    <property type="match status" value="1"/>
</dbReference>
<dbReference type="PROSITE" id="PS50162">
    <property type="entry name" value="RECA_2"/>
    <property type="match status" value="1"/>
</dbReference>
<dbReference type="PROSITE" id="PS50163">
    <property type="entry name" value="RECA_3"/>
    <property type="match status" value="1"/>
</dbReference>
<comment type="function">
    <text evidence="1">Can catalyze the hydrolysis of ATP in the presence of single-stranded DNA, the ATP-dependent uptake of single-stranded DNA by duplex DNA, and the ATP-dependent hybridization of homologous single-stranded DNAs. It interacts with LexA causing its activation and leading to its autocatalytic cleavage.</text>
</comment>
<comment type="subcellular location">
    <subcellularLocation>
        <location evidence="1">Cytoplasm</location>
    </subcellularLocation>
</comment>
<comment type="similarity">
    <text evidence="1">Belongs to the RecA family.</text>
</comment>
<reference key="1">
    <citation type="submission" date="2007-06" db="EMBL/GenBank/DDBJ databases">
        <title>Complete sequence of Clostridium beijerinckii NCIMB 8052.</title>
        <authorList>
            <consortium name="US DOE Joint Genome Institute"/>
            <person name="Copeland A."/>
            <person name="Lucas S."/>
            <person name="Lapidus A."/>
            <person name="Barry K."/>
            <person name="Detter J.C."/>
            <person name="Glavina del Rio T."/>
            <person name="Hammon N."/>
            <person name="Israni S."/>
            <person name="Dalin E."/>
            <person name="Tice H."/>
            <person name="Pitluck S."/>
            <person name="Sims D."/>
            <person name="Brettin T."/>
            <person name="Bruce D."/>
            <person name="Tapia R."/>
            <person name="Brainard J."/>
            <person name="Schmutz J."/>
            <person name="Larimer F."/>
            <person name="Land M."/>
            <person name="Hauser L."/>
            <person name="Kyrpides N."/>
            <person name="Mikhailova N."/>
            <person name="Bennet G."/>
            <person name="Cann I."/>
            <person name="Chen J.-S."/>
            <person name="Contreras A.L."/>
            <person name="Jones D."/>
            <person name="Kashket E."/>
            <person name="Mitchell W."/>
            <person name="Stoddard S."/>
            <person name="Schwarz W."/>
            <person name="Qureshi N."/>
            <person name="Young M."/>
            <person name="Shi Z."/>
            <person name="Ezeji T."/>
            <person name="White B."/>
            <person name="Blaschek H."/>
            <person name="Richardson P."/>
        </authorList>
    </citation>
    <scope>NUCLEOTIDE SEQUENCE [LARGE SCALE GENOMIC DNA]</scope>
    <source>
        <strain>ATCC 51743 / NCIMB 8052</strain>
    </source>
</reference>
<reference key="2">
    <citation type="journal article" date="1992" name="J. Bacteriol.">
        <title>A general method for cloning recA genes of Gram-positive bacteria by polymerase chain reaction.</title>
        <authorList>
            <person name="Duwat P."/>
            <person name="Ehrlich S.D."/>
            <person name="Gruss A."/>
        </authorList>
    </citation>
    <scope>NUCLEOTIDE SEQUENCE [GENOMIC DNA] OF 104-207</scope>
</reference>
<protein>
    <recommendedName>
        <fullName evidence="1">Protein RecA</fullName>
    </recommendedName>
    <alternativeName>
        <fullName evidence="1">Recombinase A</fullName>
    </alternativeName>
</protein>
<gene>
    <name evidence="1" type="primary">recA</name>
    <name type="ordered locus">Cbei_1216</name>
</gene>
<feature type="chain" id="PRO_0000122691" description="Protein RecA">
    <location>
        <begin position="1"/>
        <end position="361"/>
    </location>
</feature>
<feature type="region of interest" description="Disordered" evidence="2">
    <location>
        <begin position="342"/>
        <end position="361"/>
    </location>
</feature>
<feature type="compositionally biased region" description="Basic and acidic residues" evidence="2">
    <location>
        <begin position="344"/>
        <end position="361"/>
    </location>
</feature>
<feature type="binding site" evidence="1">
    <location>
        <begin position="68"/>
        <end position="75"/>
    </location>
    <ligand>
        <name>ATP</name>
        <dbReference type="ChEBI" id="CHEBI:30616"/>
    </ligand>
</feature>
<feature type="sequence conflict" description="In Ref. 2; AAA23273." evidence="3" ref="2">
    <original>VGV</original>
    <variation>LGF</variation>
    <location>
        <begin position="201"/>
        <end position="203"/>
    </location>
</feature>